<keyword id="KW-1185">Reference proteome</keyword>
<keyword id="KW-0749">Sporulation</keyword>
<accession>Q9KAI7</accession>
<feature type="chain" id="PRO_0000217206" description="Small, acid-soluble spore protein O">
    <location>
        <begin position="1"/>
        <end position="53"/>
    </location>
</feature>
<feature type="region of interest" description="Disordered" evidence="2">
    <location>
        <begin position="1"/>
        <end position="53"/>
    </location>
</feature>
<protein>
    <recommendedName>
        <fullName evidence="1">Small, acid-soluble spore protein O</fullName>
        <shortName evidence="1">SASP O</shortName>
    </recommendedName>
</protein>
<gene>
    <name evidence="1" type="primary">sspO</name>
    <name type="ordered locus">BH2300</name>
</gene>
<evidence type="ECO:0000255" key="1">
    <source>
        <dbReference type="HAMAP-Rule" id="MF_00665"/>
    </source>
</evidence>
<evidence type="ECO:0000256" key="2">
    <source>
        <dbReference type="SAM" id="MobiDB-lite"/>
    </source>
</evidence>
<organism>
    <name type="scientific">Halalkalibacterium halodurans (strain ATCC BAA-125 / DSM 18197 / FERM 7344 / JCM 9153 / C-125)</name>
    <name type="common">Bacillus halodurans</name>
    <dbReference type="NCBI Taxonomy" id="272558"/>
    <lineage>
        <taxon>Bacteria</taxon>
        <taxon>Bacillati</taxon>
        <taxon>Bacillota</taxon>
        <taxon>Bacilli</taxon>
        <taxon>Bacillales</taxon>
        <taxon>Bacillaceae</taxon>
        <taxon>Halalkalibacterium (ex Joshi et al. 2022)</taxon>
    </lineage>
</organism>
<name>SSPO_HALH5</name>
<dbReference type="EMBL" id="BA000004">
    <property type="protein sequence ID" value="BAB06019.1"/>
    <property type="molecule type" value="Genomic_DNA"/>
</dbReference>
<dbReference type="PIR" id="D83937">
    <property type="entry name" value="D83937"/>
</dbReference>
<dbReference type="RefSeq" id="WP_010898456.1">
    <property type="nucleotide sequence ID" value="NC_002570.2"/>
</dbReference>
<dbReference type="STRING" id="272558.gene:10728198"/>
<dbReference type="KEGG" id="bha:BH2300"/>
<dbReference type="HOGENOM" id="CLU_206342_0_0_9"/>
<dbReference type="OrthoDB" id="2692139at2"/>
<dbReference type="Proteomes" id="UP000001258">
    <property type="component" value="Chromosome"/>
</dbReference>
<dbReference type="GO" id="GO:0042601">
    <property type="term" value="C:endospore-forming forespore"/>
    <property type="evidence" value="ECO:0007669"/>
    <property type="project" value="InterPro"/>
</dbReference>
<dbReference type="GO" id="GO:0030436">
    <property type="term" value="P:asexual sporulation"/>
    <property type="evidence" value="ECO:0007669"/>
    <property type="project" value="UniProtKB-UniRule"/>
</dbReference>
<dbReference type="GO" id="GO:0030435">
    <property type="term" value="P:sporulation resulting in formation of a cellular spore"/>
    <property type="evidence" value="ECO:0007669"/>
    <property type="project" value="UniProtKB-KW"/>
</dbReference>
<dbReference type="HAMAP" id="MF_00665">
    <property type="entry name" value="SspO"/>
    <property type="match status" value="1"/>
</dbReference>
<dbReference type="InterPro" id="IPR012613">
    <property type="entry name" value="SASP_SspO"/>
</dbReference>
<dbReference type="NCBIfam" id="TIGR02864">
    <property type="entry name" value="spore_sspO"/>
    <property type="match status" value="1"/>
</dbReference>
<dbReference type="Pfam" id="PF08175">
    <property type="entry name" value="SspO"/>
    <property type="match status" value="1"/>
</dbReference>
<reference key="1">
    <citation type="journal article" date="2000" name="Nucleic Acids Res.">
        <title>Complete genome sequence of the alkaliphilic bacterium Bacillus halodurans and genomic sequence comparison with Bacillus subtilis.</title>
        <authorList>
            <person name="Takami H."/>
            <person name="Nakasone K."/>
            <person name="Takaki Y."/>
            <person name="Maeno G."/>
            <person name="Sasaki R."/>
            <person name="Masui N."/>
            <person name="Fuji F."/>
            <person name="Hirama C."/>
            <person name="Nakamura Y."/>
            <person name="Ogasawara N."/>
            <person name="Kuhara S."/>
            <person name="Horikoshi K."/>
        </authorList>
    </citation>
    <scope>NUCLEOTIDE SEQUENCE [LARGE SCALE GENOMIC DNA]</scope>
    <source>
        <strain>ATCC BAA-125 / DSM 18197 / FERM 7344 / JCM 9153 / C-125</strain>
    </source>
</reference>
<sequence length="53" mass="5941">MVRKKANHSRPGMNAAKAQGKDAGLTSQFHAEIGQEPLNQAQRQNNKKRKKNQ</sequence>
<proteinExistence type="inferred from homology"/>
<comment type="subcellular location">
    <subcellularLocation>
        <location evidence="1">Spore core</location>
    </subcellularLocation>
</comment>
<comment type="induction">
    <text evidence="1">Expressed only in the forespore compartment of sporulating cells.</text>
</comment>
<comment type="similarity">
    <text evidence="1">Belongs to the SspO family.</text>
</comment>